<comment type="function">
    <text evidence="1">Catalyzes the reversible conversion of 3-phosphohydroxypyruvate to phosphoserine and of 3-hydroxy-2-oxo-4-phosphonooxybutanoate to phosphohydroxythreonine.</text>
</comment>
<comment type="catalytic activity">
    <reaction evidence="1">
        <text>O-phospho-L-serine + 2-oxoglutarate = 3-phosphooxypyruvate + L-glutamate</text>
        <dbReference type="Rhea" id="RHEA:14329"/>
        <dbReference type="ChEBI" id="CHEBI:16810"/>
        <dbReference type="ChEBI" id="CHEBI:18110"/>
        <dbReference type="ChEBI" id="CHEBI:29985"/>
        <dbReference type="ChEBI" id="CHEBI:57524"/>
        <dbReference type="EC" id="2.6.1.52"/>
    </reaction>
</comment>
<comment type="catalytic activity">
    <reaction evidence="1">
        <text>4-(phosphooxy)-L-threonine + 2-oxoglutarate = (R)-3-hydroxy-2-oxo-4-phosphooxybutanoate + L-glutamate</text>
        <dbReference type="Rhea" id="RHEA:16573"/>
        <dbReference type="ChEBI" id="CHEBI:16810"/>
        <dbReference type="ChEBI" id="CHEBI:29985"/>
        <dbReference type="ChEBI" id="CHEBI:58452"/>
        <dbReference type="ChEBI" id="CHEBI:58538"/>
        <dbReference type="EC" id="2.6.1.52"/>
    </reaction>
</comment>
<comment type="cofactor">
    <cofactor evidence="1">
        <name>pyridoxal 5'-phosphate</name>
        <dbReference type="ChEBI" id="CHEBI:597326"/>
    </cofactor>
    <text evidence="1">Binds 1 pyridoxal phosphate per subunit.</text>
</comment>
<comment type="pathway">
    <text evidence="1">Amino-acid biosynthesis; L-serine biosynthesis; L-serine from 3-phospho-D-glycerate: step 2/3.</text>
</comment>
<comment type="subunit">
    <text evidence="1">Homodimer.</text>
</comment>
<comment type="subcellular location">
    <subcellularLocation>
        <location evidence="1">Cytoplasm</location>
    </subcellularLocation>
</comment>
<comment type="similarity">
    <text evidence="1">Belongs to the class-V pyridoxal-phosphate-dependent aminotransferase family. SerC subfamily.</text>
</comment>
<proteinExistence type="inferred from homology"/>
<organism>
    <name type="scientific">Bacillus thuringiensis subsp. konkukian (strain 97-27)</name>
    <dbReference type="NCBI Taxonomy" id="281309"/>
    <lineage>
        <taxon>Bacteria</taxon>
        <taxon>Bacillati</taxon>
        <taxon>Bacillota</taxon>
        <taxon>Bacilli</taxon>
        <taxon>Bacillales</taxon>
        <taxon>Bacillaceae</taxon>
        <taxon>Bacillus</taxon>
        <taxon>Bacillus cereus group</taxon>
    </lineage>
</organism>
<sequence>MERVYNFSAGPSILPLPVLEKVQKELVNYNGTGMSIMEMSHRSSYFQSIIDEAGSLLRELMNIPDEYEVLFLQGGASLQFSMIPLNLMNTYKKAGYVLTGSWSKKALQEAEKVGEVQVIASSENEKFTTIPKLDGLLGNEKLDYVHITTNNTIEGTKYVDIPHVDKVPLVADMSSNILSERYDVSKFGLIYAGAQKNLGPAGLTIAIIKRDLIGGADRYCPTMLNYETYSKNNSLYNTPPSFSIYVTKIVLEWLKEQGGVSAIEEQNKMKSSLLYNFLDESKLFTSPVDPTYRSLMNIPFTTPSEELNNEFLQKAKERGLVTLKGHRSVGGMRASIYNAMPAHGVQQLVNYMKEFELENR</sequence>
<evidence type="ECO:0000255" key="1">
    <source>
        <dbReference type="HAMAP-Rule" id="MF_00160"/>
    </source>
</evidence>
<dbReference type="EC" id="2.6.1.52" evidence="1"/>
<dbReference type="EMBL" id="AE017355">
    <property type="protein sequence ID" value="AAT62315.1"/>
    <property type="molecule type" value="Genomic_DNA"/>
</dbReference>
<dbReference type="RefSeq" id="WP_011181767.1">
    <property type="nucleotide sequence ID" value="NC_005957.1"/>
</dbReference>
<dbReference type="RefSeq" id="YP_037346.1">
    <property type="nucleotide sequence ID" value="NC_005957.1"/>
</dbReference>
<dbReference type="SMR" id="Q6HGI0"/>
<dbReference type="KEGG" id="btk:BT9727_3023"/>
<dbReference type="PATRIC" id="fig|281309.8.peg.3218"/>
<dbReference type="HOGENOM" id="CLU_034866_0_2_9"/>
<dbReference type="UniPathway" id="UPA00135">
    <property type="reaction ID" value="UER00197"/>
</dbReference>
<dbReference type="Proteomes" id="UP000001301">
    <property type="component" value="Chromosome"/>
</dbReference>
<dbReference type="GO" id="GO:0005737">
    <property type="term" value="C:cytoplasm"/>
    <property type="evidence" value="ECO:0007669"/>
    <property type="project" value="UniProtKB-SubCell"/>
</dbReference>
<dbReference type="GO" id="GO:0004648">
    <property type="term" value="F:O-phospho-L-serine:2-oxoglutarate aminotransferase activity"/>
    <property type="evidence" value="ECO:0007669"/>
    <property type="project" value="UniProtKB-UniRule"/>
</dbReference>
<dbReference type="GO" id="GO:0030170">
    <property type="term" value="F:pyridoxal phosphate binding"/>
    <property type="evidence" value="ECO:0007669"/>
    <property type="project" value="UniProtKB-UniRule"/>
</dbReference>
<dbReference type="GO" id="GO:0006564">
    <property type="term" value="P:L-serine biosynthetic process"/>
    <property type="evidence" value="ECO:0007669"/>
    <property type="project" value="UniProtKB-UniRule"/>
</dbReference>
<dbReference type="CDD" id="cd00611">
    <property type="entry name" value="PSAT_like"/>
    <property type="match status" value="1"/>
</dbReference>
<dbReference type="FunFam" id="3.40.640.10:FF:000010">
    <property type="entry name" value="Phosphoserine aminotransferase"/>
    <property type="match status" value="1"/>
</dbReference>
<dbReference type="FunFam" id="3.90.1150.10:FF:000006">
    <property type="entry name" value="Phosphoserine aminotransferase"/>
    <property type="match status" value="1"/>
</dbReference>
<dbReference type="Gene3D" id="3.90.1150.10">
    <property type="entry name" value="Aspartate Aminotransferase, domain 1"/>
    <property type="match status" value="1"/>
</dbReference>
<dbReference type="Gene3D" id="3.40.640.10">
    <property type="entry name" value="Type I PLP-dependent aspartate aminotransferase-like (Major domain)"/>
    <property type="match status" value="1"/>
</dbReference>
<dbReference type="HAMAP" id="MF_00160">
    <property type="entry name" value="SerC_aminotrans_5"/>
    <property type="match status" value="1"/>
</dbReference>
<dbReference type="InterPro" id="IPR000192">
    <property type="entry name" value="Aminotrans_V_dom"/>
</dbReference>
<dbReference type="InterPro" id="IPR020578">
    <property type="entry name" value="Aminotrans_V_PyrdxlP_BS"/>
</dbReference>
<dbReference type="InterPro" id="IPR022278">
    <property type="entry name" value="Pser_aminoTfrase"/>
</dbReference>
<dbReference type="InterPro" id="IPR015424">
    <property type="entry name" value="PyrdxlP-dep_Trfase"/>
</dbReference>
<dbReference type="InterPro" id="IPR015421">
    <property type="entry name" value="PyrdxlP-dep_Trfase_major"/>
</dbReference>
<dbReference type="InterPro" id="IPR015422">
    <property type="entry name" value="PyrdxlP-dep_Trfase_small"/>
</dbReference>
<dbReference type="NCBIfam" id="NF003764">
    <property type="entry name" value="PRK05355.1"/>
    <property type="match status" value="1"/>
</dbReference>
<dbReference type="NCBIfam" id="TIGR01364">
    <property type="entry name" value="serC_1"/>
    <property type="match status" value="1"/>
</dbReference>
<dbReference type="PANTHER" id="PTHR43247">
    <property type="entry name" value="PHOSPHOSERINE AMINOTRANSFERASE"/>
    <property type="match status" value="1"/>
</dbReference>
<dbReference type="PANTHER" id="PTHR43247:SF1">
    <property type="entry name" value="PHOSPHOSERINE AMINOTRANSFERASE"/>
    <property type="match status" value="1"/>
</dbReference>
<dbReference type="Pfam" id="PF00266">
    <property type="entry name" value="Aminotran_5"/>
    <property type="match status" value="1"/>
</dbReference>
<dbReference type="PIRSF" id="PIRSF000525">
    <property type="entry name" value="SerC"/>
    <property type="match status" value="1"/>
</dbReference>
<dbReference type="SUPFAM" id="SSF53383">
    <property type="entry name" value="PLP-dependent transferases"/>
    <property type="match status" value="1"/>
</dbReference>
<dbReference type="PROSITE" id="PS00595">
    <property type="entry name" value="AA_TRANSFER_CLASS_5"/>
    <property type="match status" value="1"/>
</dbReference>
<feature type="chain" id="PRO_0000150151" description="Phosphoserine aminotransferase">
    <location>
        <begin position="1"/>
        <end position="360"/>
    </location>
</feature>
<feature type="binding site" evidence="1">
    <location>
        <position position="42"/>
    </location>
    <ligand>
        <name>L-glutamate</name>
        <dbReference type="ChEBI" id="CHEBI:29985"/>
    </ligand>
</feature>
<feature type="binding site" evidence="1">
    <location>
        <begin position="76"/>
        <end position="77"/>
    </location>
    <ligand>
        <name>pyridoxal 5'-phosphate</name>
        <dbReference type="ChEBI" id="CHEBI:597326"/>
    </ligand>
</feature>
<feature type="binding site" evidence="1">
    <location>
        <position position="102"/>
    </location>
    <ligand>
        <name>pyridoxal 5'-phosphate</name>
        <dbReference type="ChEBI" id="CHEBI:597326"/>
    </ligand>
</feature>
<feature type="binding site" evidence="1">
    <location>
        <position position="152"/>
    </location>
    <ligand>
        <name>pyridoxal 5'-phosphate</name>
        <dbReference type="ChEBI" id="CHEBI:597326"/>
    </ligand>
</feature>
<feature type="binding site" evidence="1">
    <location>
        <position position="172"/>
    </location>
    <ligand>
        <name>pyridoxal 5'-phosphate</name>
        <dbReference type="ChEBI" id="CHEBI:597326"/>
    </ligand>
</feature>
<feature type="binding site" evidence="1">
    <location>
        <position position="195"/>
    </location>
    <ligand>
        <name>pyridoxal 5'-phosphate</name>
        <dbReference type="ChEBI" id="CHEBI:597326"/>
    </ligand>
</feature>
<feature type="binding site" evidence="1">
    <location>
        <begin position="237"/>
        <end position="238"/>
    </location>
    <ligand>
        <name>pyridoxal 5'-phosphate</name>
        <dbReference type="ChEBI" id="CHEBI:597326"/>
    </ligand>
</feature>
<feature type="modified residue" description="N6-(pyridoxal phosphate)lysine" evidence="1">
    <location>
        <position position="196"/>
    </location>
</feature>
<accession>Q6HGI0</accession>
<name>SERC_BACHK</name>
<reference key="1">
    <citation type="journal article" date="2006" name="J. Bacteriol.">
        <title>Pathogenomic sequence analysis of Bacillus cereus and Bacillus thuringiensis isolates closely related to Bacillus anthracis.</title>
        <authorList>
            <person name="Han C.S."/>
            <person name="Xie G."/>
            <person name="Challacombe J.F."/>
            <person name="Altherr M.R."/>
            <person name="Bhotika S.S."/>
            <person name="Bruce D."/>
            <person name="Campbell C.S."/>
            <person name="Campbell M.L."/>
            <person name="Chen J."/>
            <person name="Chertkov O."/>
            <person name="Cleland C."/>
            <person name="Dimitrijevic M."/>
            <person name="Doggett N.A."/>
            <person name="Fawcett J.J."/>
            <person name="Glavina T."/>
            <person name="Goodwin L.A."/>
            <person name="Hill K.K."/>
            <person name="Hitchcock P."/>
            <person name="Jackson P.J."/>
            <person name="Keim P."/>
            <person name="Kewalramani A.R."/>
            <person name="Longmire J."/>
            <person name="Lucas S."/>
            <person name="Malfatti S."/>
            <person name="McMurry K."/>
            <person name="Meincke L.J."/>
            <person name="Misra M."/>
            <person name="Moseman B.L."/>
            <person name="Mundt M."/>
            <person name="Munk A.C."/>
            <person name="Okinaka R.T."/>
            <person name="Parson-Quintana B."/>
            <person name="Reilly L.P."/>
            <person name="Richardson P."/>
            <person name="Robinson D.L."/>
            <person name="Rubin E."/>
            <person name="Saunders E."/>
            <person name="Tapia R."/>
            <person name="Tesmer J.G."/>
            <person name="Thayer N."/>
            <person name="Thompson L.S."/>
            <person name="Tice H."/>
            <person name="Ticknor L.O."/>
            <person name="Wills P.L."/>
            <person name="Brettin T.S."/>
            <person name="Gilna P."/>
        </authorList>
    </citation>
    <scope>NUCLEOTIDE SEQUENCE [LARGE SCALE GENOMIC DNA]</scope>
    <source>
        <strain>97-27</strain>
    </source>
</reference>
<keyword id="KW-0028">Amino-acid biosynthesis</keyword>
<keyword id="KW-0032">Aminotransferase</keyword>
<keyword id="KW-0963">Cytoplasm</keyword>
<keyword id="KW-0663">Pyridoxal phosphate</keyword>
<keyword id="KW-0718">Serine biosynthesis</keyword>
<keyword id="KW-0808">Transferase</keyword>
<gene>
    <name evidence="1" type="primary">serC</name>
    <name type="ordered locus">BT9727_3023</name>
</gene>
<protein>
    <recommendedName>
        <fullName evidence="1">Phosphoserine aminotransferase</fullName>
        <ecNumber evidence="1">2.6.1.52</ecNumber>
    </recommendedName>
    <alternativeName>
        <fullName evidence="1">Phosphohydroxythreonine aminotransferase</fullName>
        <shortName evidence="1">PSAT</shortName>
    </alternativeName>
</protein>